<name>RS10_ANAMM</name>
<proteinExistence type="inferred from homology"/>
<evidence type="ECO:0000255" key="1">
    <source>
        <dbReference type="HAMAP-Rule" id="MF_00508"/>
    </source>
</evidence>
<evidence type="ECO:0000305" key="2"/>
<keyword id="KW-0687">Ribonucleoprotein</keyword>
<keyword id="KW-0689">Ribosomal protein</keyword>
<dbReference type="EMBL" id="CP000030">
    <property type="protein sequence ID" value="AAV86823.1"/>
    <property type="molecule type" value="Genomic_DNA"/>
</dbReference>
<dbReference type="RefSeq" id="WP_010265314.1">
    <property type="nucleotide sequence ID" value="NZ_AFMU01000034.1"/>
</dbReference>
<dbReference type="SMR" id="Q5PA57"/>
<dbReference type="GeneID" id="7397879"/>
<dbReference type="KEGG" id="ama:AM913"/>
<dbReference type="PATRIC" id="fig|320483.3.peg.790"/>
<dbReference type="HOGENOM" id="CLU_122625_1_3_5"/>
<dbReference type="GO" id="GO:1990904">
    <property type="term" value="C:ribonucleoprotein complex"/>
    <property type="evidence" value="ECO:0007669"/>
    <property type="project" value="UniProtKB-KW"/>
</dbReference>
<dbReference type="GO" id="GO:0005840">
    <property type="term" value="C:ribosome"/>
    <property type="evidence" value="ECO:0007669"/>
    <property type="project" value="UniProtKB-KW"/>
</dbReference>
<dbReference type="GO" id="GO:0003735">
    <property type="term" value="F:structural constituent of ribosome"/>
    <property type="evidence" value="ECO:0007669"/>
    <property type="project" value="InterPro"/>
</dbReference>
<dbReference type="GO" id="GO:0000049">
    <property type="term" value="F:tRNA binding"/>
    <property type="evidence" value="ECO:0007669"/>
    <property type="project" value="UniProtKB-UniRule"/>
</dbReference>
<dbReference type="GO" id="GO:0006412">
    <property type="term" value="P:translation"/>
    <property type="evidence" value="ECO:0007669"/>
    <property type="project" value="UniProtKB-UniRule"/>
</dbReference>
<dbReference type="FunFam" id="3.30.70.600:FF:000003">
    <property type="entry name" value="30S ribosomal protein S10"/>
    <property type="match status" value="1"/>
</dbReference>
<dbReference type="Gene3D" id="3.30.70.600">
    <property type="entry name" value="Ribosomal protein S10 domain"/>
    <property type="match status" value="1"/>
</dbReference>
<dbReference type="HAMAP" id="MF_00508">
    <property type="entry name" value="Ribosomal_uS10"/>
    <property type="match status" value="1"/>
</dbReference>
<dbReference type="InterPro" id="IPR001848">
    <property type="entry name" value="Ribosomal_uS10"/>
</dbReference>
<dbReference type="InterPro" id="IPR027486">
    <property type="entry name" value="Ribosomal_uS10_dom"/>
</dbReference>
<dbReference type="InterPro" id="IPR036838">
    <property type="entry name" value="Ribosomal_uS10_dom_sf"/>
</dbReference>
<dbReference type="NCBIfam" id="NF001861">
    <property type="entry name" value="PRK00596.1"/>
    <property type="match status" value="1"/>
</dbReference>
<dbReference type="NCBIfam" id="TIGR01049">
    <property type="entry name" value="rpsJ_bact"/>
    <property type="match status" value="1"/>
</dbReference>
<dbReference type="PANTHER" id="PTHR11700">
    <property type="entry name" value="30S RIBOSOMAL PROTEIN S10 FAMILY MEMBER"/>
    <property type="match status" value="1"/>
</dbReference>
<dbReference type="Pfam" id="PF00338">
    <property type="entry name" value="Ribosomal_S10"/>
    <property type="match status" value="1"/>
</dbReference>
<dbReference type="PRINTS" id="PR00971">
    <property type="entry name" value="RIBOSOMALS10"/>
</dbReference>
<dbReference type="SMART" id="SM01403">
    <property type="entry name" value="Ribosomal_S10"/>
    <property type="match status" value="1"/>
</dbReference>
<dbReference type="SUPFAM" id="SSF54999">
    <property type="entry name" value="Ribosomal protein S10"/>
    <property type="match status" value="1"/>
</dbReference>
<feature type="chain" id="PRO_0000237009" description="Small ribosomal subunit protein uS10">
    <location>
        <begin position="1"/>
        <end position="105"/>
    </location>
</feature>
<protein>
    <recommendedName>
        <fullName evidence="1">Small ribosomal subunit protein uS10</fullName>
    </recommendedName>
    <alternativeName>
        <fullName evidence="2">30S ribosomal protein S10</fullName>
    </alternativeName>
</protein>
<comment type="function">
    <text evidence="1">Involved in the binding of tRNA to the ribosomes.</text>
</comment>
<comment type="subunit">
    <text evidence="1">Part of the 30S ribosomal subunit.</text>
</comment>
<comment type="similarity">
    <text evidence="1">Belongs to the universal ribosomal protein uS10 family.</text>
</comment>
<reference key="1">
    <citation type="journal article" date="2005" name="Proc. Natl. Acad. Sci. U.S.A.">
        <title>Complete genome sequencing of Anaplasma marginale reveals that the surface is skewed to two superfamilies of outer membrane proteins.</title>
        <authorList>
            <person name="Brayton K.A."/>
            <person name="Kappmeyer L.S."/>
            <person name="Herndon D.R."/>
            <person name="Dark M.J."/>
            <person name="Tibbals D.L."/>
            <person name="Palmer G.H."/>
            <person name="McGuire T.C."/>
            <person name="Knowles D.P. Jr."/>
        </authorList>
    </citation>
    <scope>NUCLEOTIDE SEQUENCE [LARGE SCALE GENOMIC DNA]</scope>
    <source>
        <strain>St. Maries</strain>
    </source>
</reference>
<sequence>MVTQKIYIELKAFDHCLLDGSARNIILIARRSGAKVNGPVFFPRRIAKFIVNRSTHVDKKSREQFEIRTHKRLISLPKANSAILQALMSLQLPAGVDVKVKVVGG</sequence>
<organism>
    <name type="scientific">Anaplasma marginale (strain St. Maries)</name>
    <dbReference type="NCBI Taxonomy" id="234826"/>
    <lineage>
        <taxon>Bacteria</taxon>
        <taxon>Pseudomonadati</taxon>
        <taxon>Pseudomonadota</taxon>
        <taxon>Alphaproteobacteria</taxon>
        <taxon>Rickettsiales</taxon>
        <taxon>Anaplasmataceae</taxon>
        <taxon>Anaplasma</taxon>
    </lineage>
</organism>
<accession>Q5PA57</accession>
<gene>
    <name evidence="1" type="primary">rpsJ</name>
    <name type="ordered locus">AM913</name>
</gene>